<keyword id="KW-0963">Cytoplasm</keyword>
<keyword id="KW-0489">Methyltransferase</keyword>
<keyword id="KW-1185">Reference proteome</keyword>
<keyword id="KW-0949">S-adenosyl-L-methionine</keyword>
<keyword id="KW-0808">Transferase</keyword>
<comment type="function">
    <text evidence="1">Involved in cellular response to chemical stress and may contribute to resistance toward antimicrobial natural compounds as well as drugs. Catalyzes the methylation and detoxification of the P.aeruginosa toxin 2-heptyl-1-hydroxy-4(1H)-quinolinone (HQNO) to 2-heptyl-1-methoxy-4(1H)-quinolinone (HMOQ).</text>
</comment>
<comment type="catalytic activity">
    <reaction evidence="1">
        <text>2-heptyl-1-hydroxy-4(1H)-quinolinone + S-adenosyl-L-methionine = 2-heptyl-1-methoxy-4(1H)-quinolinone + S-adenosyl-L-homocysteine + H(+)</text>
        <dbReference type="Rhea" id="RHEA:65924"/>
        <dbReference type="ChEBI" id="CHEBI:15378"/>
        <dbReference type="ChEBI" id="CHEBI:57856"/>
        <dbReference type="ChEBI" id="CHEBI:59789"/>
        <dbReference type="ChEBI" id="CHEBI:157768"/>
        <dbReference type="ChEBI" id="CHEBI:157769"/>
        <dbReference type="EC" id="2.1.1.374"/>
    </reaction>
    <physiologicalReaction direction="left-to-right" evidence="1">
        <dbReference type="Rhea" id="RHEA:65925"/>
    </physiologicalReaction>
</comment>
<comment type="subunit">
    <text evidence="1">Monomer.</text>
</comment>
<comment type="subcellular location">
    <subcellularLocation>
        <location evidence="2">Cytoplasm</location>
    </subcellularLocation>
</comment>
<comment type="induction">
    <text evidence="2">By salicylate and at higher concentrations by para-aminosalicylate (PAS) (at protein level).</text>
</comment>
<comment type="similarity">
    <text evidence="3">Belongs to the methyltransferase superfamily.</text>
</comment>
<sequence>MSTVLTYIRAVDIYEHMTESLDLEFESAYRGESVAFGEGVRPPWSIGEPQPELAALIVQGKFRGDVLDVGCGEAAISLALAERGHTTVGLDLSPAAVELARHEAAKRGLANASFEVADASSFTGYDGRFDTIVDSTLFHSMPVESREGYLQSIVRAAAPGASYFVLVFDRAAIPEGPINAVTEDELRAAVSKYWIIDEIKPARLYARFPAGFAGMPALLDIREEPNGLQSIGGWLLSAHLG</sequence>
<dbReference type="EC" id="2.1.1.374" evidence="1"/>
<dbReference type="EMBL" id="CP000611">
    <property type="protein sequence ID" value="ABQ72290.1"/>
    <property type="molecule type" value="Genomic_DNA"/>
</dbReference>
<dbReference type="SMR" id="A5TZU0"/>
<dbReference type="KEGG" id="mra:MRA_0567"/>
<dbReference type="eggNOG" id="COG2226">
    <property type="taxonomic scope" value="Bacteria"/>
</dbReference>
<dbReference type="HOGENOM" id="CLU_056435_4_2_11"/>
<dbReference type="Proteomes" id="UP000001988">
    <property type="component" value="Chromosome"/>
</dbReference>
<dbReference type="GO" id="GO:0005737">
    <property type="term" value="C:cytoplasm"/>
    <property type="evidence" value="ECO:0007669"/>
    <property type="project" value="UniProtKB-SubCell"/>
</dbReference>
<dbReference type="GO" id="GO:0008168">
    <property type="term" value="F:methyltransferase activity"/>
    <property type="evidence" value="ECO:0007669"/>
    <property type="project" value="UniProtKB-KW"/>
</dbReference>
<dbReference type="GO" id="GO:0032259">
    <property type="term" value="P:methylation"/>
    <property type="evidence" value="ECO:0007669"/>
    <property type="project" value="UniProtKB-KW"/>
</dbReference>
<dbReference type="CDD" id="cd02440">
    <property type="entry name" value="AdoMet_MTases"/>
    <property type="match status" value="1"/>
</dbReference>
<dbReference type="FunFam" id="3.40.50.150:FF:000291">
    <property type="entry name" value="Benzoquinone methyltransferase"/>
    <property type="match status" value="1"/>
</dbReference>
<dbReference type="Gene3D" id="3.40.50.150">
    <property type="entry name" value="Vaccinia Virus protein VP39"/>
    <property type="match status" value="1"/>
</dbReference>
<dbReference type="InterPro" id="IPR041698">
    <property type="entry name" value="Methyltransf_25"/>
</dbReference>
<dbReference type="InterPro" id="IPR029063">
    <property type="entry name" value="SAM-dependent_MTases_sf"/>
</dbReference>
<dbReference type="PANTHER" id="PTHR43464">
    <property type="entry name" value="METHYLTRANSFERASE"/>
    <property type="match status" value="1"/>
</dbReference>
<dbReference type="PANTHER" id="PTHR43464:SF19">
    <property type="entry name" value="UBIQUINONE BIOSYNTHESIS O-METHYLTRANSFERASE, MITOCHONDRIAL"/>
    <property type="match status" value="1"/>
</dbReference>
<dbReference type="Pfam" id="PF13649">
    <property type="entry name" value="Methyltransf_25"/>
    <property type="match status" value="1"/>
</dbReference>
<dbReference type="SUPFAM" id="SSF53335">
    <property type="entry name" value="S-adenosyl-L-methionine-dependent methyltransferases"/>
    <property type="match status" value="1"/>
</dbReference>
<feature type="chain" id="PRO_0000419776" description="2-heptyl-1-hydroxyquinolin-4(1H)-one methyltransferase">
    <location>
        <begin position="1"/>
        <end position="241"/>
    </location>
</feature>
<protein>
    <recommendedName>
        <fullName evidence="1">2-heptyl-1-hydroxyquinolin-4(1H)-one methyltransferase</fullName>
        <shortName evidence="1">HQNO methyltransferase</shortName>
        <shortName evidence="1">HQNO-MTase</shortName>
        <ecNumber evidence="1">2.1.1.374</ecNumber>
    </recommendedName>
    <alternativeName>
        <fullName evidence="1">Heterocyclic toxin methyltransferase</fullName>
    </alternativeName>
</protein>
<organism>
    <name type="scientific">Mycobacterium tuberculosis (strain ATCC 25177 / H37Ra)</name>
    <dbReference type="NCBI Taxonomy" id="419947"/>
    <lineage>
        <taxon>Bacteria</taxon>
        <taxon>Bacillati</taxon>
        <taxon>Actinomycetota</taxon>
        <taxon>Actinomycetes</taxon>
        <taxon>Mycobacteriales</taxon>
        <taxon>Mycobacteriaceae</taxon>
        <taxon>Mycobacterium</taxon>
        <taxon>Mycobacterium tuberculosis complex</taxon>
    </lineage>
</organism>
<proteinExistence type="evidence at protein level"/>
<name>HTM_MYCTA</name>
<accession>A5TZU0</accession>
<gene>
    <name evidence="1" type="primary">htm</name>
    <name type="ordered locus">MRA_0567</name>
</gene>
<evidence type="ECO:0000250" key="1">
    <source>
        <dbReference type="UniProtKB" id="P9WKL5"/>
    </source>
</evidence>
<evidence type="ECO:0000269" key="2">
    <source>
    </source>
</evidence>
<evidence type="ECO:0000305" key="3"/>
<reference key="1">
    <citation type="journal article" date="2008" name="PLoS ONE">
        <title>Genetic basis of virulence attenuation revealed by comparative genomic analysis of Mycobacterium tuberculosis strain H37Ra versus H37Rv.</title>
        <authorList>
            <person name="Zheng H."/>
            <person name="Lu L."/>
            <person name="Wang B."/>
            <person name="Pu S."/>
            <person name="Zhang X."/>
            <person name="Zhu G."/>
            <person name="Shi W."/>
            <person name="Zhang L."/>
            <person name="Wang H."/>
            <person name="Wang S."/>
            <person name="Zhao G."/>
            <person name="Zhang Y."/>
        </authorList>
    </citation>
    <scope>NUCLEOTIDE SEQUENCE [LARGE SCALE GENOMIC DNA]</scope>
    <source>
        <strain>ATCC 25177 / H37Ra</strain>
    </source>
</reference>
<reference key="2">
    <citation type="journal article" date="2001" name="FEMS Microbiol. Lett.">
        <title>Salicylate uniquely induces a 27-kDa protein in tubercle bacillus.</title>
        <authorList>
            <person name="Sun Z."/>
            <person name="Cheng S.J."/>
            <person name="Zhang H."/>
            <person name="Zhang Y."/>
        </authorList>
    </citation>
    <scope>SUBCELLULAR LOCATION</scope>
    <scope>INDUCTION</scope>
    <source>
        <strain>ATCC 25177 / H37Ra</strain>
    </source>
</reference>